<protein>
    <recommendedName>
        <fullName evidence="1">1-(5-phosphoribosyl)-5-[(5-phosphoribosylamino)methylideneamino] imidazole-4-carboxamide isomerase</fullName>
        <ecNumber evidence="1">5.3.1.16</ecNumber>
    </recommendedName>
    <alternativeName>
        <fullName evidence="1">Phosphoribosylformimino-5-aminoimidazole carboxamide ribotide isomerase</fullName>
    </alternativeName>
</protein>
<reference key="1">
    <citation type="journal article" date="2008" name="ISME J.">
        <title>Comparative genomics of two ecotypes of the marine planktonic copiotroph Alteromonas macleodii suggests alternative lifestyles associated with different kinds of particulate organic matter.</title>
        <authorList>
            <person name="Ivars-Martinez E."/>
            <person name="Martin-Cuadrado A.-B."/>
            <person name="D'Auria G."/>
            <person name="Mira A."/>
            <person name="Ferriera S."/>
            <person name="Johnson J."/>
            <person name="Friedman R."/>
            <person name="Rodriguez-Valera F."/>
        </authorList>
    </citation>
    <scope>NUCLEOTIDE SEQUENCE [LARGE SCALE GENOMIC DNA]</scope>
    <source>
        <strain>DSM 17117 / CIP 110805 / LMG 28347 / Deep ecotype</strain>
    </source>
</reference>
<comment type="catalytic activity">
    <reaction evidence="1">
        <text>1-(5-phospho-beta-D-ribosyl)-5-[(5-phospho-beta-D-ribosylamino)methylideneamino]imidazole-4-carboxamide = 5-[(5-phospho-1-deoxy-D-ribulos-1-ylimino)methylamino]-1-(5-phospho-beta-D-ribosyl)imidazole-4-carboxamide</text>
        <dbReference type="Rhea" id="RHEA:15469"/>
        <dbReference type="ChEBI" id="CHEBI:58435"/>
        <dbReference type="ChEBI" id="CHEBI:58525"/>
        <dbReference type="EC" id="5.3.1.16"/>
    </reaction>
</comment>
<comment type="pathway">
    <text evidence="1">Amino-acid biosynthesis; L-histidine biosynthesis; L-histidine from 5-phospho-alpha-D-ribose 1-diphosphate: step 4/9.</text>
</comment>
<comment type="subcellular location">
    <subcellularLocation>
        <location evidence="1">Cytoplasm</location>
    </subcellularLocation>
</comment>
<comment type="similarity">
    <text evidence="1">Belongs to the HisA/HisF family.</text>
</comment>
<sequence length="245" mass="26745">MIIPAIDLIDGHVVRLYQGDYEQKTQYELDPVEVVHDYADQGATWLHIVDLTGAKDTSKRQLELIKSMVDTKRMQFQAGGGIRSEEEVAQLLETGVSRVVIGSLAVKQPELVKSWVEKYGPERIVLALDININESGEKLIATHGWQENSGVALEGLLEDFATVGAKHVLCTDISRDGTLQGANTELYQEMAARFPNVSWQASGGIGSINDIEALKPTNVGGVILGRALLEGKFTVKEAIACWQSA</sequence>
<evidence type="ECO:0000255" key="1">
    <source>
        <dbReference type="HAMAP-Rule" id="MF_01014"/>
    </source>
</evidence>
<proteinExistence type="inferred from homology"/>
<dbReference type="EC" id="5.3.1.16" evidence="1"/>
<dbReference type="EMBL" id="CP001103">
    <property type="protein sequence ID" value="AEA98600.1"/>
    <property type="molecule type" value="Genomic_DNA"/>
</dbReference>
<dbReference type="RefSeq" id="WP_012518918.1">
    <property type="nucleotide sequence ID" value="NC_011138.3"/>
</dbReference>
<dbReference type="SMR" id="B4RU63"/>
<dbReference type="KEGG" id="amc:MADE_1012320"/>
<dbReference type="HOGENOM" id="CLU_048577_1_2_6"/>
<dbReference type="UniPathway" id="UPA00031">
    <property type="reaction ID" value="UER00009"/>
</dbReference>
<dbReference type="Proteomes" id="UP000001870">
    <property type="component" value="Chromosome"/>
</dbReference>
<dbReference type="GO" id="GO:0005737">
    <property type="term" value="C:cytoplasm"/>
    <property type="evidence" value="ECO:0007669"/>
    <property type="project" value="UniProtKB-SubCell"/>
</dbReference>
<dbReference type="GO" id="GO:0003949">
    <property type="term" value="F:1-(5-phosphoribosyl)-5-[(5-phosphoribosylamino)methylideneamino]imidazole-4-carboxamide isomerase activity"/>
    <property type="evidence" value="ECO:0007669"/>
    <property type="project" value="UniProtKB-UniRule"/>
</dbReference>
<dbReference type="GO" id="GO:0000105">
    <property type="term" value="P:L-histidine biosynthetic process"/>
    <property type="evidence" value="ECO:0007669"/>
    <property type="project" value="UniProtKB-UniRule"/>
</dbReference>
<dbReference type="GO" id="GO:0000162">
    <property type="term" value="P:L-tryptophan biosynthetic process"/>
    <property type="evidence" value="ECO:0007669"/>
    <property type="project" value="TreeGrafter"/>
</dbReference>
<dbReference type="CDD" id="cd04732">
    <property type="entry name" value="HisA"/>
    <property type="match status" value="1"/>
</dbReference>
<dbReference type="FunFam" id="3.20.20.70:FF:000009">
    <property type="entry name" value="1-(5-phosphoribosyl)-5-[(5-phosphoribosylamino)methylideneamino] imidazole-4-carboxamide isomerase"/>
    <property type="match status" value="1"/>
</dbReference>
<dbReference type="Gene3D" id="3.20.20.70">
    <property type="entry name" value="Aldolase class I"/>
    <property type="match status" value="1"/>
</dbReference>
<dbReference type="HAMAP" id="MF_01014">
    <property type="entry name" value="HisA"/>
    <property type="match status" value="1"/>
</dbReference>
<dbReference type="InterPro" id="IPR013785">
    <property type="entry name" value="Aldolase_TIM"/>
</dbReference>
<dbReference type="InterPro" id="IPR006062">
    <property type="entry name" value="His_biosynth"/>
</dbReference>
<dbReference type="InterPro" id="IPR006063">
    <property type="entry name" value="HisA_bact_arch"/>
</dbReference>
<dbReference type="InterPro" id="IPR044524">
    <property type="entry name" value="Isoase_HisA-like"/>
</dbReference>
<dbReference type="InterPro" id="IPR023016">
    <property type="entry name" value="Isoase_HisA-like_bact"/>
</dbReference>
<dbReference type="InterPro" id="IPR011060">
    <property type="entry name" value="RibuloseP-bd_barrel"/>
</dbReference>
<dbReference type="NCBIfam" id="TIGR00007">
    <property type="entry name" value="1-(5-phosphoribosyl)-5-[(5-phosphoribosylamino)methylideneamino]imidazole-4-carboxamide isomerase"/>
    <property type="match status" value="1"/>
</dbReference>
<dbReference type="PANTHER" id="PTHR43090">
    <property type="entry name" value="1-(5-PHOSPHORIBOSYL)-5-[(5-PHOSPHORIBOSYLAMINO)METHYLIDENEAMINO] IMIDAZOLE-4-CARBOXAMIDE ISOMERASE"/>
    <property type="match status" value="1"/>
</dbReference>
<dbReference type="PANTHER" id="PTHR43090:SF2">
    <property type="entry name" value="1-(5-PHOSPHORIBOSYL)-5-[(5-PHOSPHORIBOSYLAMINO)METHYLIDENEAMINO] IMIDAZOLE-4-CARBOXAMIDE ISOMERASE"/>
    <property type="match status" value="1"/>
</dbReference>
<dbReference type="Pfam" id="PF00977">
    <property type="entry name" value="His_biosynth"/>
    <property type="match status" value="1"/>
</dbReference>
<dbReference type="SUPFAM" id="SSF51366">
    <property type="entry name" value="Ribulose-phoshate binding barrel"/>
    <property type="match status" value="1"/>
</dbReference>
<gene>
    <name evidence="1" type="primary">hisA</name>
    <name type="ordered locus">MADE_1012320</name>
</gene>
<keyword id="KW-0028">Amino-acid biosynthesis</keyword>
<keyword id="KW-0963">Cytoplasm</keyword>
<keyword id="KW-0368">Histidine biosynthesis</keyword>
<keyword id="KW-0413">Isomerase</keyword>
<accession>B4RU63</accession>
<accession>F2G6W6</accession>
<feature type="chain" id="PRO_1000135075" description="1-(5-phosphoribosyl)-5-[(5-phosphoribosylamino)methylideneamino] imidazole-4-carboxamide isomerase">
    <location>
        <begin position="1"/>
        <end position="245"/>
    </location>
</feature>
<feature type="active site" description="Proton acceptor" evidence="1">
    <location>
        <position position="7"/>
    </location>
</feature>
<feature type="active site" description="Proton donor" evidence="1">
    <location>
        <position position="129"/>
    </location>
</feature>
<organism>
    <name type="scientific">Alteromonas mediterranea (strain DSM 17117 / CIP 110805 / LMG 28347 / Deep ecotype)</name>
    <dbReference type="NCBI Taxonomy" id="1774373"/>
    <lineage>
        <taxon>Bacteria</taxon>
        <taxon>Pseudomonadati</taxon>
        <taxon>Pseudomonadota</taxon>
        <taxon>Gammaproteobacteria</taxon>
        <taxon>Alteromonadales</taxon>
        <taxon>Alteromonadaceae</taxon>
        <taxon>Alteromonas/Salinimonas group</taxon>
        <taxon>Alteromonas</taxon>
    </lineage>
</organism>
<name>HIS4_ALTMD</name>